<sequence length="136" mass="15857">MRHYEIIFLVHPDQSEQVGGMVERYTKLIEEDGGKIHRLEDWGRRQLAYAINNVHKAHYVLINVECSGKALSELEDNFRYNDAVIRNLVIRRDEAITGQSEMLKAEENRSERRERRERPEHGGHEGLDGDSDKADE</sequence>
<organism>
    <name type="scientific">Azotobacter vinelandii (strain DJ / ATCC BAA-1303)</name>
    <dbReference type="NCBI Taxonomy" id="322710"/>
    <lineage>
        <taxon>Bacteria</taxon>
        <taxon>Pseudomonadati</taxon>
        <taxon>Pseudomonadota</taxon>
        <taxon>Gammaproteobacteria</taxon>
        <taxon>Pseudomonadales</taxon>
        <taxon>Pseudomonadaceae</taxon>
        <taxon>Azotobacter</taxon>
    </lineage>
</organism>
<feature type="chain" id="PRO_1000205388" description="Small ribosomal subunit protein bS6">
    <location>
        <begin position="1"/>
        <end position="136"/>
    </location>
</feature>
<feature type="region of interest" description="Disordered" evidence="2">
    <location>
        <begin position="99"/>
        <end position="136"/>
    </location>
</feature>
<feature type="compositionally biased region" description="Basic and acidic residues" evidence="2">
    <location>
        <begin position="103"/>
        <end position="136"/>
    </location>
</feature>
<accession>C1DLR2</accession>
<evidence type="ECO:0000255" key="1">
    <source>
        <dbReference type="HAMAP-Rule" id="MF_00360"/>
    </source>
</evidence>
<evidence type="ECO:0000256" key="2">
    <source>
        <dbReference type="SAM" id="MobiDB-lite"/>
    </source>
</evidence>
<evidence type="ECO:0000305" key="3"/>
<reference key="1">
    <citation type="journal article" date="2009" name="J. Bacteriol.">
        <title>Genome sequence of Azotobacter vinelandii, an obligate aerobe specialized to support diverse anaerobic metabolic processes.</title>
        <authorList>
            <person name="Setubal J.C."/>
            <person name="Dos Santos P."/>
            <person name="Goldman B.S."/>
            <person name="Ertesvaag H."/>
            <person name="Espin G."/>
            <person name="Rubio L.M."/>
            <person name="Valla S."/>
            <person name="Almeida N.F."/>
            <person name="Balasubramanian D."/>
            <person name="Cromes L."/>
            <person name="Curatti L."/>
            <person name="Du Z."/>
            <person name="Godsy E."/>
            <person name="Goodner B."/>
            <person name="Hellner-Burris K."/>
            <person name="Hernandez J.A."/>
            <person name="Houmiel K."/>
            <person name="Imperial J."/>
            <person name="Kennedy C."/>
            <person name="Larson T.J."/>
            <person name="Latreille P."/>
            <person name="Ligon L.S."/>
            <person name="Lu J."/>
            <person name="Maerk M."/>
            <person name="Miller N.M."/>
            <person name="Norton S."/>
            <person name="O'Carroll I.P."/>
            <person name="Paulsen I."/>
            <person name="Raulfs E.C."/>
            <person name="Roemer R."/>
            <person name="Rosser J."/>
            <person name="Segura D."/>
            <person name="Slater S."/>
            <person name="Stricklin S.L."/>
            <person name="Studholme D.J."/>
            <person name="Sun J."/>
            <person name="Viana C.J."/>
            <person name="Wallin E."/>
            <person name="Wang B."/>
            <person name="Wheeler C."/>
            <person name="Zhu H."/>
            <person name="Dean D.R."/>
            <person name="Dixon R."/>
            <person name="Wood D."/>
        </authorList>
    </citation>
    <scope>NUCLEOTIDE SEQUENCE [LARGE SCALE GENOMIC DNA]</scope>
    <source>
        <strain>DJ / ATCC BAA-1303</strain>
    </source>
</reference>
<proteinExistence type="inferred from homology"/>
<comment type="function">
    <text evidence="1">Binds together with bS18 to 16S ribosomal RNA.</text>
</comment>
<comment type="similarity">
    <text evidence="1">Belongs to the bacterial ribosomal protein bS6 family.</text>
</comment>
<gene>
    <name evidence="1" type="primary">rpsF</name>
    <name type="ordered locus">Avin_07640</name>
</gene>
<name>RS6_AZOVD</name>
<dbReference type="EMBL" id="CP001157">
    <property type="protein sequence ID" value="ACO77010.1"/>
    <property type="molecule type" value="Genomic_DNA"/>
</dbReference>
<dbReference type="RefSeq" id="WP_012699435.1">
    <property type="nucleotide sequence ID" value="NC_012560.1"/>
</dbReference>
<dbReference type="SMR" id="C1DLR2"/>
<dbReference type="STRING" id="322710.Avin_07640"/>
<dbReference type="EnsemblBacteria" id="ACO77010">
    <property type="protein sequence ID" value="ACO77010"/>
    <property type="gene ID" value="Avin_07640"/>
</dbReference>
<dbReference type="GeneID" id="88184161"/>
<dbReference type="KEGG" id="avn:Avin_07640"/>
<dbReference type="eggNOG" id="COG0360">
    <property type="taxonomic scope" value="Bacteria"/>
</dbReference>
<dbReference type="HOGENOM" id="CLU_113441_6_1_6"/>
<dbReference type="OrthoDB" id="9812702at2"/>
<dbReference type="Proteomes" id="UP000002424">
    <property type="component" value="Chromosome"/>
</dbReference>
<dbReference type="GO" id="GO:0022627">
    <property type="term" value="C:cytosolic small ribosomal subunit"/>
    <property type="evidence" value="ECO:0007669"/>
    <property type="project" value="TreeGrafter"/>
</dbReference>
<dbReference type="GO" id="GO:0070181">
    <property type="term" value="F:small ribosomal subunit rRNA binding"/>
    <property type="evidence" value="ECO:0007669"/>
    <property type="project" value="TreeGrafter"/>
</dbReference>
<dbReference type="GO" id="GO:0003735">
    <property type="term" value="F:structural constituent of ribosome"/>
    <property type="evidence" value="ECO:0007669"/>
    <property type="project" value="InterPro"/>
</dbReference>
<dbReference type="GO" id="GO:0006412">
    <property type="term" value="P:translation"/>
    <property type="evidence" value="ECO:0007669"/>
    <property type="project" value="UniProtKB-UniRule"/>
</dbReference>
<dbReference type="CDD" id="cd00473">
    <property type="entry name" value="bS6"/>
    <property type="match status" value="1"/>
</dbReference>
<dbReference type="FunFam" id="3.30.70.60:FF:000003">
    <property type="entry name" value="30S ribosomal protein S6"/>
    <property type="match status" value="1"/>
</dbReference>
<dbReference type="Gene3D" id="3.30.70.60">
    <property type="match status" value="1"/>
</dbReference>
<dbReference type="HAMAP" id="MF_00360">
    <property type="entry name" value="Ribosomal_bS6"/>
    <property type="match status" value="1"/>
</dbReference>
<dbReference type="InterPro" id="IPR000529">
    <property type="entry name" value="Ribosomal_bS6"/>
</dbReference>
<dbReference type="InterPro" id="IPR020815">
    <property type="entry name" value="Ribosomal_bS6_CS"/>
</dbReference>
<dbReference type="InterPro" id="IPR035980">
    <property type="entry name" value="Ribosomal_bS6_sf"/>
</dbReference>
<dbReference type="InterPro" id="IPR020814">
    <property type="entry name" value="Ribosomal_S6_plastid/chlpt"/>
</dbReference>
<dbReference type="InterPro" id="IPR014717">
    <property type="entry name" value="Transl_elong_EF1B/ribsomal_bS6"/>
</dbReference>
<dbReference type="NCBIfam" id="TIGR00166">
    <property type="entry name" value="S6"/>
    <property type="match status" value="1"/>
</dbReference>
<dbReference type="PANTHER" id="PTHR21011">
    <property type="entry name" value="MITOCHONDRIAL 28S RIBOSOMAL PROTEIN S6"/>
    <property type="match status" value="1"/>
</dbReference>
<dbReference type="PANTHER" id="PTHR21011:SF1">
    <property type="entry name" value="SMALL RIBOSOMAL SUBUNIT PROTEIN BS6M"/>
    <property type="match status" value="1"/>
</dbReference>
<dbReference type="Pfam" id="PF01250">
    <property type="entry name" value="Ribosomal_S6"/>
    <property type="match status" value="1"/>
</dbReference>
<dbReference type="SUPFAM" id="SSF54995">
    <property type="entry name" value="Ribosomal protein S6"/>
    <property type="match status" value="1"/>
</dbReference>
<dbReference type="PROSITE" id="PS01048">
    <property type="entry name" value="RIBOSOMAL_S6"/>
    <property type="match status" value="1"/>
</dbReference>
<keyword id="KW-0687">Ribonucleoprotein</keyword>
<keyword id="KW-0689">Ribosomal protein</keyword>
<keyword id="KW-0694">RNA-binding</keyword>
<keyword id="KW-0699">rRNA-binding</keyword>
<protein>
    <recommendedName>
        <fullName evidence="1">Small ribosomal subunit protein bS6</fullName>
    </recommendedName>
    <alternativeName>
        <fullName evidence="3">30S ribosomal protein S6</fullName>
    </alternativeName>
</protein>